<protein>
    <recommendedName>
        <fullName evidence="1">Major outer membrane lipoprotein Lpp</fullName>
    </recommendedName>
</protein>
<organism>
    <name type="scientific">Photorhabdus laumondii subsp. laumondii (strain DSM 15139 / CIP 105565 / TT01)</name>
    <name type="common">Photorhabdus luminescens subsp. laumondii</name>
    <dbReference type="NCBI Taxonomy" id="243265"/>
    <lineage>
        <taxon>Bacteria</taxon>
        <taxon>Pseudomonadati</taxon>
        <taxon>Pseudomonadota</taxon>
        <taxon>Gammaproteobacteria</taxon>
        <taxon>Enterobacterales</taxon>
        <taxon>Morganellaceae</taxon>
        <taxon>Photorhabdus</taxon>
    </lineage>
</organism>
<accession>Q7N3U8</accession>
<reference key="1">
    <citation type="journal article" date="2003" name="Nat. Biotechnol.">
        <title>The genome sequence of the entomopathogenic bacterium Photorhabdus luminescens.</title>
        <authorList>
            <person name="Duchaud E."/>
            <person name="Rusniok C."/>
            <person name="Frangeul L."/>
            <person name="Buchrieser C."/>
            <person name="Givaudan A."/>
            <person name="Taourit S."/>
            <person name="Bocs S."/>
            <person name="Boursaux-Eude C."/>
            <person name="Chandler M."/>
            <person name="Charles J.-F."/>
            <person name="Dassa E."/>
            <person name="Derose R."/>
            <person name="Derzelle S."/>
            <person name="Freyssinet G."/>
            <person name="Gaudriault S."/>
            <person name="Medigue C."/>
            <person name="Lanois A."/>
            <person name="Powell K."/>
            <person name="Siguier P."/>
            <person name="Vincent R."/>
            <person name="Wingate V."/>
            <person name="Zouine M."/>
            <person name="Glaser P."/>
            <person name="Boemare N."/>
            <person name="Danchin A."/>
            <person name="Kunst F."/>
        </authorList>
    </citation>
    <scope>NUCLEOTIDE SEQUENCE [LARGE SCALE GENOMIC DNA]</scope>
    <source>
        <strain>DSM 15139 / CIP 105565 / TT01</strain>
    </source>
</reference>
<comment type="function">
    <text evidence="1">A highly abundant outer membrane lipoprotein that controls the distance between the inner and outer membranes. The only protein known to be covalently linked to the peptidoglycan network (PGN). Also non-covalently binds the PGN. The link between the cell outer membrane and PGN contributes to maintenance of the structural and functional integrity of the cell envelope, and maintains the correct distance between the PGN and the outer membrane.</text>
</comment>
<comment type="subunit">
    <text evidence="1">Homotrimer.</text>
</comment>
<comment type="subcellular location">
    <subcellularLocation>
        <location evidence="1">Cell outer membrane</location>
        <topology evidence="1">Lipid-anchor</topology>
        <orientation evidence="1">Periplasmic side</orientation>
    </subcellularLocation>
    <subcellularLocation>
        <location evidence="1">Secreted</location>
        <location evidence="1">Cell wall</location>
        <topology evidence="1">Peptidoglycan-anchor</topology>
    </subcellularLocation>
    <text evidence="1">Attached via its lipidated N-terminus to the inner leaflet of the outer membrane. Attached to the peptidoglycan network (PGN) via its C-terminus.</text>
</comment>
<comment type="similarity">
    <text evidence="1">Belongs to the Lpp family.</text>
</comment>
<dbReference type="EMBL" id="BX571867">
    <property type="protein sequence ID" value="CAE14989.1"/>
    <property type="molecule type" value="Genomic_DNA"/>
</dbReference>
<dbReference type="RefSeq" id="WP_011146837.1">
    <property type="nucleotide sequence ID" value="NC_005126.1"/>
</dbReference>
<dbReference type="SMR" id="Q7N3U8"/>
<dbReference type="STRING" id="243265.plu2615"/>
<dbReference type="GeneID" id="48848875"/>
<dbReference type="KEGG" id="plu:plu2615"/>
<dbReference type="eggNOG" id="COG4238">
    <property type="taxonomic scope" value="Bacteria"/>
</dbReference>
<dbReference type="HOGENOM" id="CLU_166934_2_1_6"/>
<dbReference type="OrthoDB" id="6567756at2"/>
<dbReference type="Proteomes" id="UP000002514">
    <property type="component" value="Chromosome"/>
</dbReference>
<dbReference type="GO" id="GO:0009279">
    <property type="term" value="C:cell outer membrane"/>
    <property type="evidence" value="ECO:0007669"/>
    <property type="project" value="UniProtKB-SubCell"/>
</dbReference>
<dbReference type="GO" id="GO:0005576">
    <property type="term" value="C:extracellular region"/>
    <property type="evidence" value="ECO:0007669"/>
    <property type="project" value="UniProtKB-KW"/>
</dbReference>
<dbReference type="GO" id="GO:0008289">
    <property type="term" value="F:lipid binding"/>
    <property type="evidence" value="ECO:0007669"/>
    <property type="project" value="UniProtKB-UniRule"/>
</dbReference>
<dbReference type="GO" id="GO:0042834">
    <property type="term" value="F:peptidoglycan binding"/>
    <property type="evidence" value="ECO:0007669"/>
    <property type="project" value="UniProtKB-UniRule"/>
</dbReference>
<dbReference type="GO" id="GO:0030258">
    <property type="term" value="P:lipid modification"/>
    <property type="evidence" value="ECO:0007669"/>
    <property type="project" value="UniProtKB-UniRule"/>
</dbReference>
<dbReference type="GO" id="GO:0043580">
    <property type="term" value="P:periplasmic space organization"/>
    <property type="evidence" value="ECO:0007669"/>
    <property type="project" value="UniProtKB-UniRule"/>
</dbReference>
<dbReference type="Gene3D" id="1.20.5.190">
    <property type="match status" value="1"/>
</dbReference>
<dbReference type="HAMAP" id="MF_00843">
    <property type="entry name" value="Lpp"/>
    <property type="match status" value="1"/>
</dbReference>
<dbReference type="InterPro" id="IPR006817">
    <property type="entry name" value="Lipoprotein_leucine-zipper_dom"/>
</dbReference>
<dbReference type="InterPro" id="IPR016367">
    <property type="entry name" value="MOM_Lpp"/>
</dbReference>
<dbReference type="NCBIfam" id="NF040598">
    <property type="entry name" value="Ala_zip_lipo"/>
    <property type="match status" value="1"/>
</dbReference>
<dbReference type="NCBIfam" id="NF011925">
    <property type="entry name" value="PRK15396.1"/>
    <property type="match status" value="1"/>
</dbReference>
<dbReference type="PANTHER" id="PTHR38763:SF1">
    <property type="entry name" value="MAJOR OUTER MEMBRANE LIPOPROTEIN LPP"/>
    <property type="match status" value="1"/>
</dbReference>
<dbReference type="PANTHER" id="PTHR38763">
    <property type="entry name" value="MAJOR OUTER MEMBRANE PROLIPOPROTEIN LPP"/>
    <property type="match status" value="1"/>
</dbReference>
<dbReference type="Pfam" id="PF04728">
    <property type="entry name" value="LPP"/>
    <property type="match status" value="1"/>
</dbReference>
<dbReference type="PIRSF" id="PIRSF002855">
    <property type="entry name" value="Murein-lipoprotein"/>
    <property type="match status" value="1"/>
</dbReference>
<dbReference type="SUPFAM" id="SSF58042">
    <property type="entry name" value="Outer membrane lipoprotein"/>
    <property type="match status" value="1"/>
</dbReference>
<dbReference type="PROSITE" id="PS51257">
    <property type="entry name" value="PROKAR_LIPOPROTEIN"/>
    <property type="match status" value="1"/>
</dbReference>
<evidence type="ECO:0000255" key="1">
    <source>
        <dbReference type="HAMAP-Rule" id="MF_00843"/>
    </source>
</evidence>
<keyword id="KW-0998">Cell outer membrane</keyword>
<keyword id="KW-0134">Cell wall</keyword>
<keyword id="KW-0175">Coiled coil</keyword>
<keyword id="KW-0449">Lipoprotein</keyword>
<keyword id="KW-0472">Membrane</keyword>
<keyword id="KW-0564">Palmitate</keyword>
<keyword id="KW-0572">Peptidoglycan-anchor</keyword>
<keyword id="KW-1185">Reference proteome</keyword>
<keyword id="KW-0677">Repeat</keyword>
<keyword id="KW-0964">Secreted</keyword>
<keyword id="KW-0732">Signal</keyword>
<name>LPP_PHOLL</name>
<gene>
    <name evidence="1" type="primary">lpp</name>
    <name type="ordered locus">plu2615</name>
</gene>
<feature type="signal peptide" evidence="1">
    <location>
        <begin position="1"/>
        <end position="20"/>
    </location>
</feature>
<feature type="chain" id="PRO_0000018337" description="Major outer membrane lipoprotein Lpp" evidence="1">
    <location>
        <begin position="21"/>
        <end position="78"/>
    </location>
</feature>
<feature type="repeat" evidence="1">
    <location>
        <begin position="24"/>
        <end position="34"/>
    </location>
</feature>
<feature type="repeat" evidence="1">
    <location>
        <begin position="38"/>
        <end position="48"/>
    </location>
</feature>
<feature type="coiled-coil region" evidence="1">
    <location>
        <begin position="27"/>
        <end position="75"/>
    </location>
</feature>
<feature type="modified residue" description="N6-murein peptidoglycan lysine" evidence="1">
    <location>
        <position position="78"/>
    </location>
</feature>
<feature type="lipid moiety-binding region" description="N-palmitoyl cysteine" evidence="1">
    <location>
        <position position="21"/>
    </location>
</feature>
<feature type="lipid moiety-binding region" description="S-diacylglycerol cysteine" evidence="1">
    <location>
        <position position="21"/>
    </location>
</feature>
<sequence length="78" mass="8369">MNRTKIVLGAVVLASTLLAGCSSTAKVDQLTSDIQTLNAKVDQLSNDVNAVHTDVQAAKDDAARANQRLDNQVRSYKK</sequence>
<proteinExistence type="inferred from homology"/>